<comment type="function">
    <text evidence="1">Required for maturation of 30S ribosomal subunits.</text>
</comment>
<comment type="subcellular location">
    <subcellularLocation>
        <location evidence="1">Cytoplasm</location>
    </subcellularLocation>
</comment>
<comment type="similarity">
    <text evidence="1">Belongs to the RimP family.</text>
</comment>
<protein>
    <recommendedName>
        <fullName evidence="1">Ribosome maturation factor RimP</fullName>
    </recommendedName>
</protein>
<keyword id="KW-0963">Cytoplasm</keyword>
<keyword id="KW-0690">Ribosome biogenesis</keyword>
<name>RIMP_ACIB5</name>
<dbReference type="EMBL" id="CP001182">
    <property type="protein sequence ID" value="ACJ39839.1"/>
    <property type="molecule type" value="Genomic_DNA"/>
</dbReference>
<dbReference type="RefSeq" id="WP_000777730.1">
    <property type="nucleotide sequence ID" value="NC_011586.2"/>
</dbReference>
<dbReference type="SMR" id="B7I3R7"/>
<dbReference type="GeneID" id="92892329"/>
<dbReference type="KEGG" id="abn:AB57_0413"/>
<dbReference type="HOGENOM" id="CLU_070525_1_1_6"/>
<dbReference type="Proteomes" id="UP000007094">
    <property type="component" value="Chromosome"/>
</dbReference>
<dbReference type="GO" id="GO:0005829">
    <property type="term" value="C:cytosol"/>
    <property type="evidence" value="ECO:0007669"/>
    <property type="project" value="TreeGrafter"/>
</dbReference>
<dbReference type="GO" id="GO:0000028">
    <property type="term" value="P:ribosomal small subunit assembly"/>
    <property type="evidence" value="ECO:0007669"/>
    <property type="project" value="TreeGrafter"/>
</dbReference>
<dbReference type="GO" id="GO:0006412">
    <property type="term" value="P:translation"/>
    <property type="evidence" value="ECO:0007669"/>
    <property type="project" value="TreeGrafter"/>
</dbReference>
<dbReference type="CDD" id="cd01734">
    <property type="entry name" value="YlxS_C"/>
    <property type="match status" value="1"/>
</dbReference>
<dbReference type="FunFam" id="3.30.300.70:FF:000001">
    <property type="entry name" value="Ribosome maturation factor RimP"/>
    <property type="match status" value="1"/>
</dbReference>
<dbReference type="Gene3D" id="2.30.30.180">
    <property type="entry name" value="Ribosome maturation factor RimP, C-terminal domain"/>
    <property type="match status" value="1"/>
</dbReference>
<dbReference type="Gene3D" id="3.30.300.70">
    <property type="entry name" value="RimP-like superfamily, N-terminal"/>
    <property type="match status" value="1"/>
</dbReference>
<dbReference type="HAMAP" id="MF_01077">
    <property type="entry name" value="RimP"/>
    <property type="match status" value="1"/>
</dbReference>
<dbReference type="InterPro" id="IPR003728">
    <property type="entry name" value="Ribosome_maturation_RimP"/>
</dbReference>
<dbReference type="InterPro" id="IPR028998">
    <property type="entry name" value="RimP_C"/>
</dbReference>
<dbReference type="InterPro" id="IPR036847">
    <property type="entry name" value="RimP_C_sf"/>
</dbReference>
<dbReference type="InterPro" id="IPR028989">
    <property type="entry name" value="RimP_N"/>
</dbReference>
<dbReference type="InterPro" id="IPR035956">
    <property type="entry name" value="RimP_N_sf"/>
</dbReference>
<dbReference type="NCBIfam" id="NF011224">
    <property type="entry name" value="PRK14631.1"/>
    <property type="match status" value="1"/>
</dbReference>
<dbReference type="PANTHER" id="PTHR33867">
    <property type="entry name" value="RIBOSOME MATURATION FACTOR RIMP"/>
    <property type="match status" value="1"/>
</dbReference>
<dbReference type="PANTHER" id="PTHR33867:SF1">
    <property type="entry name" value="RIBOSOME MATURATION FACTOR RIMP"/>
    <property type="match status" value="1"/>
</dbReference>
<dbReference type="Pfam" id="PF17384">
    <property type="entry name" value="DUF150_C"/>
    <property type="match status" value="1"/>
</dbReference>
<dbReference type="Pfam" id="PF02576">
    <property type="entry name" value="RimP_N"/>
    <property type="match status" value="1"/>
</dbReference>
<dbReference type="SUPFAM" id="SSF74942">
    <property type="entry name" value="YhbC-like, C-terminal domain"/>
    <property type="match status" value="1"/>
</dbReference>
<dbReference type="SUPFAM" id="SSF75420">
    <property type="entry name" value="YhbC-like, N-terminal domain"/>
    <property type="match status" value="1"/>
</dbReference>
<feature type="chain" id="PRO_1000136722" description="Ribosome maturation factor RimP">
    <location>
        <begin position="1"/>
        <end position="174"/>
    </location>
</feature>
<reference key="1">
    <citation type="journal article" date="2008" name="J. Bacteriol.">
        <title>Comparative genome sequence analysis of multidrug-resistant Acinetobacter baumannii.</title>
        <authorList>
            <person name="Adams M.D."/>
            <person name="Goglin K."/>
            <person name="Molyneaux N."/>
            <person name="Hujer K.M."/>
            <person name="Lavender H."/>
            <person name="Jamison J.J."/>
            <person name="MacDonald I.J."/>
            <person name="Martin K.M."/>
            <person name="Russo T."/>
            <person name="Campagnari A.A."/>
            <person name="Hujer A.M."/>
            <person name="Bonomo R.A."/>
            <person name="Gill S.R."/>
        </authorList>
    </citation>
    <scope>NUCLEOTIDE SEQUENCE [LARGE SCALE GENOMIC DNA]</scope>
    <source>
        <strain>AB0057</strain>
    </source>
</reference>
<proteinExistence type="inferred from homology"/>
<sequence length="174" mass="19493">MKLSNKSQALYDMIAPAVEACGVDLWGIEFLPQGKRSLLRIYIDRPVDENAEPVINEDGEVEQGRGIGVEDCVRVTQQVGAMLDVHDPISGEYALEVSSPGWDRPFFQLEQLQGYIGQQVALRLIAAVENRRKFQAKLLAVDLENEEIQVEVEGKHVLDIDSNNIDKANLIYQD</sequence>
<organism>
    <name type="scientific">Acinetobacter baumannii (strain AB0057)</name>
    <dbReference type="NCBI Taxonomy" id="480119"/>
    <lineage>
        <taxon>Bacteria</taxon>
        <taxon>Pseudomonadati</taxon>
        <taxon>Pseudomonadota</taxon>
        <taxon>Gammaproteobacteria</taxon>
        <taxon>Moraxellales</taxon>
        <taxon>Moraxellaceae</taxon>
        <taxon>Acinetobacter</taxon>
        <taxon>Acinetobacter calcoaceticus/baumannii complex</taxon>
    </lineage>
</organism>
<gene>
    <name evidence="1" type="primary">rimP</name>
    <name type="ordered locus">AB57_0413</name>
</gene>
<accession>B7I3R7</accession>
<evidence type="ECO:0000255" key="1">
    <source>
        <dbReference type="HAMAP-Rule" id="MF_01077"/>
    </source>
</evidence>